<proteinExistence type="inferred from homology"/>
<feature type="chain" id="PRO_0000071250" description="Uncharacterized protein L243">
    <location>
        <begin position="1"/>
        <end position="157"/>
    </location>
</feature>
<organismHost>
    <name type="scientific">Acanthamoeba polyphaga</name>
    <name type="common">Amoeba</name>
    <dbReference type="NCBI Taxonomy" id="5757"/>
</organismHost>
<dbReference type="EMBL" id="AY653733">
    <property type="protein sequence ID" value="AAV50516.1"/>
    <property type="molecule type" value="Genomic_DNA"/>
</dbReference>
<dbReference type="KEGG" id="vg:9924850"/>
<dbReference type="OrthoDB" id="26420at10239"/>
<dbReference type="Proteomes" id="UP000001134">
    <property type="component" value="Genome"/>
</dbReference>
<gene>
    <name type="ordered locus">MIMI_L243</name>
</gene>
<reference key="1">
    <citation type="journal article" date="2004" name="Science">
        <title>The 1.2-megabase genome sequence of Mimivirus.</title>
        <authorList>
            <person name="Raoult D."/>
            <person name="Audic S."/>
            <person name="Robert C."/>
            <person name="Abergel C."/>
            <person name="Renesto P."/>
            <person name="Ogata H."/>
            <person name="La Scola B."/>
            <person name="Susan M."/>
            <person name="Claverie J.-M."/>
        </authorList>
    </citation>
    <scope>NUCLEOTIDE SEQUENCE [LARGE SCALE GENOMIC DNA]</scope>
    <source>
        <strain>Rowbotham-Bradford</strain>
    </source>
</reference>
<name>YL243_MIMIV</name>
<comment type="similarity">
    <text evidence="1">Belongs to the mimivirus L242/L243 family.</text>
</comment>
<accession>Q5UPS8</accession>
<organism>
    <name type="scientific">Acanthamoeba polyphaga mimivirus</name>
    <name type="common">APMV</name>
    <dbReference type="NCBI Taxonomy" id="212035"/>
    <lineage>
        <taxon>Viruses</taxon>
        <taxon>Varidnaviria</taxon>
        <taxon>Bamfordvirae</taxon>
        <taxon>Nucleocytoviricota</taxon>
        <taxon>Megaviricetes</taxon>
        <taxon>Imitervirales</taxon>
        <taxon>Mimiviridae</taxon>
        <taxon>Megamimivirinae</taxon>
        <taxon>Mimivirus</taxon>
        <taxon>Mimivirus bradfordmassiliense</taxon>
    </lineage>
</organism>
<evidence type="ECO:0000305" key="1"/>
<sequence>MAIASQSLSVNQMYEKLLQNGEVESNSPKNRLRLYHLLQSKKIPFETKIIGYTSGEKSLSRWSGRRMGWDLGRVVKWIESGRLTREELQRCCDLFNQSNCKPRAELSDIENVFNKELNREQKCQLIKNNWDKILDDKWTPFDYCMLKKTIVRITLVK</sequence>
<protein>
    <recommendedName>
        <fullName>Uncharacterized protein L243</fullName>
    </recommendedName>
</protein>
<keyword id="KW-1185">Reference proteome</keyword>